<evidence type="ECO:0000255" key="1">
    <source>
        <dbReference type="HAMAP-Rule" id="MF_00480"/>
    </source>
</evidence>
<evidence type="ECO:0000305" key="2"/>
<reference key="1">
    <citation type="journal article" date="2006" name="BMC Genomics">
        <title>Comparative genome analysis: selection pressure on the Borrelia vls cassettes is essential for infectivity.</title>
        <authorList>
            <person name="Gloeckner G."/>
            <person name="Schulte-Spechtel U."/>
            <person name="Schilhabel M."/>
            <person name="Felder M."/>
            <person name="Suehnel J."/>
            <person name="Wilske B."/>
            <person name="Platzer M."/>
        </authorList>
    </citation>
    <scope>NUCLEOTIDE SEQUENCE [LARGE SCALE GENOMIC DNA]</scope>
    <source>
        <strain>PKo</strain>
    </source>
</reference>
<reference key="2">
    <citation type="journal article" date="2011" name="J. Bacteriol.">
        <title>Whole-genome sequences of two Borrelia afzelii and two Borrelia garinii Lyme disease agent isolates.</title>
        <authorList>
            <person name="Casjens S.R."/>
            <person name="Mongodin E.F."/>
            <person name="Qiu W.G."/>
            <person name="Dunn J.J."/>
            <person name="Luft B.J."/>
            <person name="Fraser-Liggett C.M."/>
            <person name="Schutzer S.E."/>
        </authorList>
    </citation>
    <scope>NUCLEOTIDE SEQUENCE [LARGE SCALE GENOMIC DNA]</scope>
    <source>
        <strain>PKo</strain>
    </source>
</reference>
<name>RS7_BORAP</name>
<comment type="function">
    <text evidence="1">One of the primary rRNA binding proteins, it binds directly to 16S rRNA where it nucleates assembly of the head domain of the 30S subunit. Is located at the subunit interface close to the decoding center, probably blocks exit of the E-site tRNA.</text>
</comment>
<comment type="subunit">
    <text evidence="1">Part of the 30S ribosomal subunit. Contacts proteins S9 and S11.</text>
</comment>
<comment type="similarity">
    <text evidence="1">Belongs to the universal ribosomal protein uS7 family.</text>
</comment>
<keyword id="KW-0687">Ribonucleoprotein</keyword>
<keyword id="KW-0689">Ribosomal protein</keyword>
<keyword id="KW-0694">RNA-binding</keyword>
<keyword id="KW-0699">rRNA-binding</keyword>
<keyword id="KW-0820">tRNA-binding</keyword>
<accession>Q0SNC1</accession>
<accession>G0IS33</accession>
<organism>
    <name type="scientific">Borreliella afzelii (strain PKo)</name>
    <name type="common">Borrelia afzelii</name>
    <dbReference type="NCBI Taxonomy" id="390236"/>
    <lineage>
        <taxon>Bacteria</taxon>
        <taxon>Pseudomonadati</taxon>
        <taxon>Spirochaetota</taxon>
        <taxon>Spirochaetia</taxon>
        <taxon>Spirochaetales</taxon>
        <taxon>Borreliaceae</taxon>
        <taxon>Borreliella</taxon>
    </lineage>
</organism>
<dbReference type="EMBL" id="CP000395">
    <property type="protein sequence ID" value="ABH01657.1"/>
    <property type="molecule type" value="Genomic_DNA"/>
</dbReference>
<dbReference type="EMBL" id="CP002933">
    <property type="protein sequence ID" value="AEL69614.1"/>
    <property type="molecule type" value="Genomic_DNA"/>
</dbReference>
<dbReference type="RefSeq" id="WP_011600995.1">
    <property type="nucleotide sequence ID" value="NZ_CP160066.1"/>
</dbReference>
<dbReference type="SMR" id="Q0SNC1"/>
<dbReference type="STRING" id="29518.BLA32_02375"/>
<dbReference type="GeneID" id="77265224"/>
<dbReference type="KEGG" id="baf:BAPKO_0401"/>
<dbReference type="KEGG" id="bafz:BafPKo_0388"/>
<dbReference type="PATRIC" id="fig|390236.22.peg.381"/>
<dbReference type="eggNOG" id="COG0049">
    <property type="taxonomic scope" value="Bacteria"/>
</dbReference>
<dbReference type="HOGENOM" id="CLU_072226_1_1_12"/>
<dbReference type="OrthoDB" id="9807653at2"/>
<dbReference type="Proteomes" id="UP000005216">
    <property type="component" value="Chromosome"/>
</dbReference>
<dbReference type="GO" id="GO:0015935">
    <property type="term" value="C:small ribosomal subunit"/>
    <property type="evidence" value="ECO:0007669"/>
    <property type="project" value="InterPro"/>
</dbReference>
<dbReference type="GO" id="GO:0019843">
    <property type="term" value="F:rRNA binding"/>
    <property type="evidence" value="ECO:0007669"/>
    <property type="project" value="UniProtKB-UniRule"/>
</dbReference>
<dbReference type="GO" id="GO:0003735">
    <property type="term" value="F:structural constituent of ribosome"/>
    <property type="evidence" value="ECO:0007669"/>
    <property type="project" value="InterPro"/>
</dbReference>
<dbReference type="GO" id="GO:0000049">
    <property type="term" value="F:tRNA binding"/>
    <property type="evidence" value="ECO:0007669"/>
    <property type="project" value="UniProtKB-UniRule"/>
</dbReference>
<dbReference type="GO" id="GO:0006412">
    <property type="term" value="P:translation"/>
    <property type="evidence" value="ECO:0007669"/>
    <property type="project" value="UniProtKB-UniRule"/>
</dbReference>
<dbReference type="CDD" id="cd14869">
    <property type="entry name" value="uS7_Bacteria"/>
    <property type="match status" value="1"/>
</dbReference>
<dbReference type="FunFam" id="1.10.455.10:FF:000001">
    <property type="entry name" value="30S ribosomal protein S7"/>
    <property type="match status" value="1"/>
</dbReference>
<dbReference type="Gene3D" id="1.10.455.10">
    <property type="entry name" value="Ribosomal protein S7 domain"/>
    <property type="match status" value="1"/>
</dbReference>
<dbReference type="HAMAP" id="MF_00480_B">
    <property type="entry name" value="Ribosomal_uS7_B"/>
    <property type="match status" value="1"/>
</dbReference>
<dbReference type="InterPro" id="IPR000235">
    <property type="entry name" value="Ribosomal_uS7"/>
</dbReference>
<dbReference type="InterPro" id="IPR005717">
    <property type="entry name" value="Ribosomal_uS7_bac/org-type"/>
</dbReference>
<dbReference type="InterPro" id="IPR020606">
    <property type="entry name" value="Ribosomal_uS7_CS"/>
</dbReference>
<dbReference type="InterPro" id="IPR023798">
    <property type="entry name" value="Ribosomal_uS7_dom"/>
</dbReference>
<dbReference type="InterPro" id="IPR036823">
    <property type="entry name" value="Ribosomal_uS7_dom_sf"/>
</dbReference>
<dbReference type="NCBIfam" id="TIGR01029">
    <property type="entry name" value="rpsG_bact"/>
    <property type="match status" value="1"/>
</dbReference>
<dbReference type="PANTHER" id="PTHR11205">
    <property type="entry name" value="RIBOSOMAL PROTEIN S7"/>
    <property type="match status" value="1"/>
</dbReference>
<dbReference type="Pfam" id="PF00177">
    <property type="entry name" value="Ribosomal_S7"/>
    <property type="match status" value="1"/>
</dbReference>
<dbReference type="PIRSF" id="PIRSF002122">
    <property type="entry name" value="RPS7p_RPS7a_RPS5e_RPS7o"/>
    <property type="match status" value="1"/>
</dbReference>
<dbReference type="SUPFAM" id="SSF47973">
    <property type="entry name" value="Ribosomal protein S7"/>
    <property type="match status" value="1"/>
</dbReference>
<dbReference type="PROSITE" id="PS00052">
    <property type="entry name" value="RIBOSOMAL_S7"/>
    <property type="match status" value="1"/>
</dbReference>
<sequence>MSRKNKKIKKKIFVDTRYNSRIVAKFANRMMYDGKKSISESILYSSIDLLADKLEDSDKMAVFCKALDNIKPLVEVRSRRVGGATYQVPVEVREERREALAMKWIIFAARKASGRSMKEKLSNELLNAYNSTGAAFKKKEDTHRMAEANKAFTHYRW</sequence>
<protein>
    <recommendedName>
        <fullName evidence="1">Small ribosomal subunit protein uS7</fullName>
    </recommendedName>
    <alternativeName>
        <fullName evidence="2">30S ribosomal protein S7</fullName>
    </alternativeName>
</protein>
<proteinExistence type="inferred from homology"/>
<gene>
    <name evidence="1" type="primary">rpsG</name>
    <name type="ordered locus">BAPKO_0401</name>
    <name type="ordered locus">BafPKo_0388</name>
</gene>
<feature type="chain" id="PRO_1000014150" description="Small ribosomal subunit protein uS7">
    <location>
        <begin position="1"/>
        <end position="157"/>
    </location>
</feature>